<sequence length="49" mass="5559">MAVKDYYKVQGDSVTRLKQFCPRCGPGVFLADHKNRLACGKCGYTEFKK</sequence>
<comment type="cofactor">
    <cofactor evidence="1">
        <name>Zn(2+)</name>
        <dbReference type="ChEBI" id="CHEBI:29105"/>
    </cofactor>
    <text evidence="1">Binds 1 zinc ion per subunit.</text>
</comment>
<comment type="subunit">
    <text evidence="1">Part of the 30S ribosomal subunit.</text>
</comment>
<comment type="similarity">
    <text evidence="1">Belongs to the eukaryotic ribosomal protein eS31 family.</text>
</comment>
<keyword id="KW-0479">Metal-binding</keyword>
<keyword id="KW-0687">Ribonucleoprotein</keyword>
<keyword id="KW-0689">Ribosomal protein</keyword>
<keyword id="KW-0862">Zinc</keyword>
<keyword id="KW-0863">Zinc-finger</keyword>
<accession>Q8PZ94</accession>
<proteinExistence type="inferred from homology"/>
<evidence type="ECO:0000255" key="1">
    <source>
        <dbReference type="HAMAP-Rule" id="MF_00777"/>
    </source>
</evidence>
<evidence type="ECO:0000305" key="2"/>
<protein>
    <recommendedName>
        <fullName evidence="1">Small ribosomal subunit protein eS31</fullName>
    </recommendedName>
    <alternativeName>
        <fullName evidence="2">30S ribosomal protein S27ae</fullName>
    </alternativeName>
</protein>
<dbReference type="EMBL" id="AE008384">
    <property type="protein sequence ID" value="AAM30296.1"/>
    <property type="molecule type" value="Genomic_DNA"/>
</dbReference>
<dbReference type="RefSeq" id="WP_011032551.1">
    <property type="nucleotide sequence ID" value="NC_003901.1"/>
</dbReference>
<dbReference type="SMR" id="Q8PZ94"/>
<dbReference type="KEGG" id="mma:MM_0600"/>
<dbReference type="PATRIC" id="fig|192952.21.peg.706"/>
<dbReference type="eggNOG" id="arCOG04183">
    <property type="taxonomic scope" value="Archaea"/>
</dbReference>
<dbReference type="HOGENOM" id="CLU_179743_2_0_2"/>
<dbReference type="Proteomes" id="UP000000595">
    <property type="component" value="Chromosome"/>
</dbReference>
<dbReference type="GO" id="GO:1990904">
    <property type="term" value="C:ribonucleoprotein complex"/>
    <property type="evidence" value="ECO:0007669"/>
    <property type="project" value="UniProtKB-KW"/>
</dbReference>
<dbReference type="GO" id="GO:0005840">
    <property type="term" value="C:ribosome"/>
    <property type="evidence" value="ECO:0007669"/>
    <property type="project" value="UniProtKB-KW"/>
</dbReference>
<dbReference type="GO" id="GO:0003735">
    <property type="term" value="F:structural constituent of ribosome"/>
    <property type="evidence" value="ECO:0007669"/>
    <property type="project" value="InterPro"/>
</dbReference>
<dbReference type="GO" id="GO:0008270">
    <property type="term" value="F:zinc ion binding"/>
    <property type="evidence" value="ECO:0007669"/>
    <property type="project" value="UniProtKB-UniRule"/>
</dbReference>
<dbReference type="GO" id="GO:0006412">
    <property type="term" value="P:translation"/>
    <property type="evidence" value="ECO:0007669"/>
    <property type="project" value="UniProtKB-UniRule"/>
</dbReference>
<dbReference type="Gene3D" id="6.20.50.180">
    <property type="match status" value="1"/>
</dbReference>
<dbReference type="HAMAP" id="MF_00777">
    <property type="entry name" value="Ribosomal_eS31"/>
    <property type="match status" value="1"/>
</dbReference>
<dbReference type="InterPro" id="IPR002906">
    <property type="entry name" value="Ribosomal_eS31"/>
</dbReference>
<dbReference type="InterPro" id="IPR022845">
    <property type="entry name" value="Ribosomal_eS31_arc"/>
</dbReference>
<dbReference type="InterPro" id="IPR011332">
    <property type="entry name" value="Ribosomal_zn-bd"/>
</dbReference>
<dbReference type="NCBIfam" id="NF001669">
    <property type="entry name" value="PRK00432.1"/>
    <property type="match status" value="1"/>
</dbReference>
<dbReference type="Pfam" id="PF01599">
    <property type="entry name" value="Ribosomal_S27"/>
    <property type="match status" value="1"/>
</dbReference>
<dbReference type="SMART" id="SM01402">
    <property type="entry name" value="Ribosomal_S27"/>
    <property type="match status" value="1"/>
</dbReference>
<dbReference type="SUPFAM" id="SSF57829">
    <property type="entry name" value="Zn-binding ribosomal proteins"/>
    <property type="match status" value="1"/>
</dbReference>
<feature type="chain" id="PRO_0000137696" description="Small ribosomal subunit protein eS31">
    <location>
        <begin position="1"/>
        <end position="49"/>
    </location>
</feature>
<feature type="zinc finger region" description="C4-type" evidence="1">
    <location>
        <begin position="21"/>
        <end position="42"/>
    </location>
</feature>
<feature type="binding site" evidence="1">
    <location>
        <position position="21"/>
    </location>
    <ligand>
        <name>Zn(2+)</name>
        <dbReference type="ChEBI" id="CHEBI:29105"/>
    </ligand>
</feature>
<feature type="binding site" evidence="1">
    <location>
        <position position="24"/>
    </location>
    <ligand>
        <name>Zn(2+)</name>
        <dbReference type="ChEBI" id="CHEBI:29105"/>
    </ligand>
</feature>
<feature type="binding site" evidence="1">
    <location>
        <position position="39"/>
    </location>
    <ligand>
        <name>Zn(2+)</name>
        <dbReference type="ChEBI" id="CHEBI:29105"/>
    </ligand>
</feature>
<feature type="binding site" evidence="1">
    <location>
        <position position="42"/>
    </location>
    <ligand>
        <name>Zn(2+)</name>
        <dbReference type="ChEBI" id="CHEBI:29105"/>
    </ligand>
</feature>
<organism>
    <name type="scientific">Methanosarcina mazei (strain ATCC BAA-159 / DSM 3647 / Goe1 / Go1 / JCM 11833 / OCM 88)</name>
    <name type="common">Methanosarcina frisia</name>
    <dbReference type="NCBI Taxonomy" id="192952"/>
    <lineage>
        <taxon>Archaea</taxon>
        <taxon>Methanobacteriati</taxon>
        <taxon>Methanobacteriota</taxon>
        <taxon>Stenosarchaea group</taxon>
        <taxon>Methanomicrobia</taxon>
        <taxon>Methanosarcinales</taxon>
        <taxon>Methanosarcinaceae</taxon>
        <taxon>Methanosarcina</taxon>
    </lineage>
</organism>
<gene>
    <name evidence="1" type="primary">rps27ae</name>
    <name type="ordered locus">MM_0600</name>
</gene>
<name>RS27A_METMA</name>
<reference key="1">
    <citation type="journal article" date="2002" name="J. Mol. Microbiol. Biotechnol.">
        <title>The genome of Methanosarcina mazei: evidence for lateral gene transfer between Bacteria and Archaea.</title>
        <authorList>
            <person name="Deppenmeier U."/>
            <person name="Johann A."/>
            <person name="Hartsch T."/>
            <person name="Merkl R."/>
            <person name="Schmitz R.A."/>
            <person name="Martinez-Arias R."/>
            <person name="Henne A."/>
            <person name="Wiezer A."/>
            <person name="Baeumer S."/>
            <person name="Jacobi C."/>
            <person name="Brueggemann H."/>
            <person name="Lienard T."/>
            <person name="Christmann A."/>
            <person name="Boemecke M."/>
            <person name="Steckel S."/>
            <person name="Bhattacharyya A."/>
            <person name="Lykidis A."/>
            <person name="Overbeek R."/>
            <person name="Klenk H.-P."/>
            <person name="Gunsalus R.P."/>
            <person name="Fritz H.-J."/>
            <person name="Gottschalk G."/>
        </authorList>
    </citation>
    <scope>NUCLEOTIDE SEQUENCE [LARGE SCALE GENOMIC DNA]</scope>
    <source>
        <strain>ATCC BAA-159 / DSM 3647 / Goe1 / Go1 / JCM 11833 / OCM 88</strain>
    </source>
</reference>